<sequence length="215" mass="23033">MSKSSMSTPNTAFPAITQEQMSSIKVDPTSNLLPSQEQLKSVSTLMVAAKVPAASVTTVALELVNFCYDNGSSAYTTVTGPSSIPEISLAQLASIVKASGTSLRKFCRYFAPIIWNLRTDKMAPANWEASGYKPSAKFAAFDFFDGVENPAAMQPPSGLIRSPTQEERIANATNKQVHLFQAAAQDNNFTSNSAFITKGQISGSTPTIQFLPPPE</sequence>
<comment type="function">
    <text>Required for genome encapsidation. Forms ribonucleoprotein complexes along with TGB1 helicase and viral RNA.</text>
</comment>
<comment type="subcellular location">
    <subcellularLocation>
        <location evidence="3">Virion</location>
    </subcellularLocation>
</comment>
<comment type="similarity">
    <text evidence="3">Belongs to the potexvirus capsid protein family.</text>
</comment>
<accession>P16596</accession>
<name>CAPSD_PMV</name>
<dbReference type="EMBL" id="D00240">
    <property type="protein sequence ID" value="BAA00169.1"/>
    <property type="molecule type" value="Genomic_RNA"/>
</dbReference>
<dbReference type="EMBL" id="D13957">
    <property type="protein sequence ID" value="BAA03054.1"/>
    <property type="molecule type" value="Genomic_RNA"/>
</dbReference>
<dbReference type="PIR" id="JQ0100">
    <property type="entry name" value="VCWGPM"/>
</dbReference>
<dbReference type="RefSeq" id="NP_044334.1">
    <property type="nucleotide sequence ID" value="NC_001748.1"/>
</dbReference>
<dbReference type="PDB" id="4DOX">
    <property type="method" value="X-ray"/>
    <property type="resolution" value="2.70 A"/>
    <property type="chains" value="A/B=1-215"/>
</dbReference>
<dbReference type="PDBsum" id="4DOX"/>
<dbReference type="SMR" id="P16596"/>
<dbReference type="iPTMnet" id="P16596"/>
<dbReference type="GeneID" id="1494025"/>
<dbReference type="KEGG" id="vg:1494025"/>
<dbReference type="OrthoDB" id="15901at10239"/>
<dbReference type="EvolutionaryTrace" id="P16596"/>
<dbReference type="Proteomes" id="UP000000477">
    <property type="component" value="Genome"/>
</dbReference>
<dbReference type="GO" id="GO:0019029">
    <property type="term" value="C:helical viral capsid"/>
    <property type="evidence" value="ECO:0007669"/>
    <property type="project" value="UniProtKB-KW"/>
</dbReference>
<dbReference type="GO" id="GO:1990904">
    <property type="term" value="C:ribonucleoprotein complex"/>
    <property type="evidence" value="ECO:0007669"/>
    <property type="project" value="UniProtKB-KW"/>
</dbReference>
<dbReference type="GO" id="GO:0005198">
    <property type="term" value="F:structural molecule activity"/>
    <property type="evidence" value="ECO:0007669"/>
    <property type="project" value="InterPro"/>
</dbReference>
<dbReference type="InterPro" id="IPR000052">
    <property type="entry name" value="Pltvir_coat"/>
</dbReference>
<dbReference type="Pfam" id="PF00286">
    <property type="entry name" value="Flexi_CP"/>
    <property type="match status" value="1"/>
</dbReference>
<dbReference type="PRINTS" id="PR00232">
    <property type="entry name" value="POTXCARLCOAT"/>
</dbReference>
<dbReference type="PROSITE" id="PS00418">
    <property type="entry name" value="POTEX_CARLAVIRUS_COAT"/>
    <property type="match status" value="1"/>
</dbReference>
<organismHost>
    <name type="scientific">Carica papaya</name>
    <name type="common">Papaya</name>
    <dbReference type="NCBI Taxonomy" id="3649"/>
</organismHost>
<organismHost>
    <name type="scientific">Ullucus tuberosus</name>
    <name type="common">Olluco</name>
    <dbReference type="NCBI Taxonomy" id="108055"/>
</organismHost>
<protein>
    <recommendedName>
        <fullName>Coat protein</fullName>
    </recommendedName>
    <alternativeName>
        <fullName>Capsid protein</fullName>
        <shortName>CP</shortName>
    </alternativeName>
</protein>
<feature type="initiator methionine" description="Removed; by host" evidence="1 2">
    <location>
        <position position="1"/>
    </location>
</feature>
<feature type="chain" id="PRO_0000222635" description="Coat protein">
    <location>
        <begin position="2"/>
        <end position="215"/>
    </location>
</feature>
<feature type="modified residue" description="N-acetylserine; by host" evidence="2">
    <location>
        <position position="2"/>
    </location>
</feature>
<feature type="sequence conflict" description="In Ref. 1; BAA03054." evidence="3" ref="1">
    <original>T</original>
    <variation>I</variation>
    <location>
        <position position="11"/>
    </location>
</feature>
<feature type="sequence conflict" description="In Ref. 3; AA sequence." evidence="3" ref="3">
    <original>S</original>
    <variation>SN</variation>
    <location>
        <position position="30"/>
    </location>
</feature>
<feature type="sequence conflict" description="In Ref. 2; BAA00169." evidence="3" ref="2">
    <location>
        <position position="77"/>
    </location>
</feature>
<feature type="sequence conflict" description="In Ref. 3; AA sequence." evidence="3" ref="3">
    <original>Q</original>
    <variation>E</variation>
    <location>
        <position position="185"/>
    </location>
</feature>
<feature type="sequence conflict" description="In Ref. 3; AA sequence." evidence="3" ref="3">
    <original>T</original>
    <variation>A</variation>
    <location>
        <position position="190"/>
    </location>
</feature>
<feature type="helix" evidence="4">
    <location>
        <begin position="18"/>
        <end position="23"/>
    </location>
</feature>
<feature type="strand" evidence="4">
    <location>
        <begin position="31"/>
        <end position="33"/>
    </location>
</feature>
<feature type="helix" evidence="4">
    <location>
        <begin position="36"/>
        <end position="48"/>
    </location>
</feature>
<feature type="helix" evidence="4">
    <location>
        <begin position="53"/>
        <end position="55"/>
    </location>
</feature>
<feature type="helix" evidence="4">
    <location>
        <begin position="56"/>
        <end position="70"/>
    </location>
</feature>
<feature type="helix" evidence="4">
    <location>
        <begin position="89"/>
        <end position="98"/>
    </location>
</feature>
<feature type="helix" evidence="4">
    <location>
        <begin position="103"/>
        <end position="108"/>
    </location>
</feature>
<feature type="helix" evidence="4">
    <location>
        <begin position="111"/>
        <end position="118"/>
    </location>
</feature>
<feature type="turn" evidence="4">
    <location>
        <begin position="119"/>
        <end position="121"/>
    </location>
</feature>
<feature type="turn" evidence="4">
    <location>
        <begin position="125"/>
        <end position="131"/>
    </location>
</feature>
<feature type="helix" evidence="4">
    <location>
        <begin position="134"/>
        <end position="139"/>
    </location>
</feature>
<feature type="helix" evidence="4">
    <location>
        <begin position="144"/>
        <end position="146"/>
    </location>
</feature>
<feature type="helix" evidence="4">
    <location>
        <begin position="165"/>
        <end position="172"/>
    </location>
</feature>
<evidence type="ECO:0000269" key="1">
    <source>
    </source>
</evidence>
<evidence type="ECO:0000269" key="2">
    <source>
    </source>
</evidence>
<evidence type="ECO:0000305" key="3"/>
<evidence type="ECO:0007829" key="4">
    <source>
        <dbReference type="PDB" id="4DOX"/>
    </source>
</evidence>
<proteinExistence type="evidence at protein level"/>
<keyword id="KW-0002">3D-structure</keyword>
<keyword id="KW-0007">Acetylation</keyword>
<keyword id="KW-0167">Capsid protein</keyword>
<keyword id="KW-0903">Direct protein sequencing</keyword>
<keyword id="KW-1139">Helical capsid protein</keyword>
<keyword id="KW-1185">Reference proteome</keyword>
<keyword id="KW-0687">Ribonucleoprotein</keyword>
<keyword id="KW-0946">Virion</keyword>
<reference key="1">
    <citation type="journal article" date="1989" name="J. Gen. Virol.">
        <title>Nucleotide sequence of papaya mosaic virus RNA.</title>
        <authorList>
            <person name="Sit T.L."/>
            <person name="Abouhaidar M.G."/>
            <person name="Holy S."/>
        </authorList>
    </citation>
    <scope>NUCLEOTIDE SEQUENCE [GENOMIC RNA]</scope>
</reference>
<reference key="2">
    <citation type="journal article" date="1988" name="J. Gen. Virol.">
        <title>Nucleotide sequence of the capsid protein gene and 3' non-coding region of papaya mosaic virus RNA.</title>
        <authorList>
            <person name="Abouhaidar M.G."/>
        </authorList>
    </citation>
    <scope>NUCLEOTIDE SEQUENCE [GENOMIC RNA]</scope>
</reference>
<reference key="3">
    <citation type="journal article" date="1986" name="Virology">
        <title>The primary structure of papaya mosaic virus coat protein.</title>
        <authorList>
            <person name="Short M.N."/>
            <person name="Turner D.S."/>
            <person name="March J.F."/>
            <person name="Pappin D.J."/>
            <person name="Parente A."/>
            <person name="Davies J.W."/>
        </authorList>
    </citation>
    <scope>PROTEIN SEQUENCE OF 2-215</scope>
</reference>
<reference key="4">
    <citation type="journal article" date="1989" name="J. Protein Chem.">
        <title>The primary structure of papaya mosaic virus coat protein: a revision.</title>
        <authorList>
            <person name="Verde C."/>
            <person name="Malorni A."/>
            <person name="Parente A."/>
        </authorList>
    </citation>
    <scope>PROTEIN SEQUENCE OF 2-5</scope>
    <scope>ACETYLATION AT SER-2</scope>
    <scope>SEQUENCE REVISION TO 214</scope>
</reference>
<reference key="5">
    <citation type="journal article" date="2005" name="Mol. Plant Microbe Interact.">
        <title>A new cell-to-cell transport model for Potexviruses.</title>
        <authorList>
            <person name="Verchot-Lubicz J."/>
        </authorList>
    </citation>
    <scope>REVIEW</scope>
</reference>
<organism>
    <name type="scientific">Papaya mosaic potexvirus</name>
    <name type="common">PMV</name>
    <dbReference type="NCBI Taxonomy" id="12181"/>
    <lineage>
        <taxon>Viruses</taxon>
        <taxon>Riboviria</taxon>
        <taxon>Orthornavirae</taxon>
        <taxon>Kitrinoviricota</taxon>
        <taxon>Alsuviricetes</taxon>
        <taxon>Tymovirales</taxon>
        <taxon>Alphaflexiviridae</taxon>
        <taxon>Potexvirus</taxon>
    </lineage>
</organism>